<organism>
    <name type="scientific">Klebsiella pneumoniae subsp. pneumoniae (strain ATCC 700721 / MGH 78578)</name>
    <dbReference type="NCBI Taxonomy" id="272620"/>
    <lineage>
        <taxon>Bacteria</taxon>
        <taxon>Pseudomonadati</taxon>
        <taxon>Pseudomonadota</taxon>
        <taxon>Gammaproteobacteria</taxon>
        <taxon>Enterobacterales</taxon>
        <taxon>Enterobacteriaceae</taxon>
        <taxon>Klebsiella/Raoultella group</taxon>
        <taxon>Klebsiella</taxon>
        <taxon>Klebsiella pneumoniae complex</taxon>
    </lineage>
</organism>
<protein>
    <recommendedName>
        <fullName evidence="1">Fructose-1,6-bisphosphatase class 1</fullName>
        <shortName evidence="1">FBPase class 1</shortName>
        <ecNumber evidence="1">3.1.3.11</ecNumber>
    </recommendedName>
    <alternativeName>
        <fullName evidence="1">D-fructose-1,6-bisphosphate 1-phosphohydrolase class 1</fullName>
    </alternativeName>
</protein>
<evidence type="ECO:0000255" key="1">
    <source>
        <dbReference type="HAMAP-Rule" id="MF_01855"/>
    </source>
</evidence>
<accession>A6THE3</accession>
<gene>
    <name evidence="1" type="primary">fbp</name>
    <name type="ordered locus">KPN78578_45530</name>
    <name type="ORF">KPN_04626</name>
</gene>
<dbReference type="EC" id="3.1.3.11" evidence="1"/>
<dbReference type="EMBL" id="CP000647">
    <property type="protein sequence ID" value="ABR79977.1"/>
    <property type="molecule type" value="Genomic_DNA"/>
</dbReference>
<dbReference type="RefSeq" id="WP_002886827.1">
    <property type="nucleotide sequence ID" value="NC_009648.1"/>
</dbReference>
<dbReference type="SMR" id="A6THE3"/>
<dbReference type="STRING" id="272620.KPN_04626"/>
<dbReference type="jPOST" id="A6THE3"/>
<dbReference type="PaxDb" id="272620-KPN_04626"/>
<dbReference type="EnsemblBacteria" id="ABR79977">
    <property type="protein sequence ID" value="ABR79977"/>
    <property type="gene ID" value="KPN_04626"/>
</dbReference>
<dbReference type="KEGG" id="kpn:KPN_04626"/>
<dbReference type="HOGENOM" id="CLU_039977_2_2_6"/>
<dbReference type="UniPathway" id="UPA00138"/>
<dbReference type="Proteomes" id="UP000000265">
    <property type="component" value="Chromosome"/>
</dbReference>
<dbReference type="GO" id="GO:0005829">
    <property type="term" value="C:cytosol"/>
    <property type="evidence" value="ECO:0007669"/>
    <property type="project" value="TreeGrafter"/>
</dbReference>
<dbReference type="GO" id="GO:0042132">
    <property type="term" value="F:fructose 1,6-bisphosphate 1-phosphatase activity"/>
    <property type="evidence" value="ECO:0007669"/>
    <property type="project" value="UniProtKB-UniRule"/>
</dbReference>
<dbReference type="GO" id="GO:0000287">
    <property type="term" value="F:magnesium ion binding"/>
    <property type="evidence" value="ECO:0007669"/>
    <property type="project" value="UniProtKB-UniRule"/>
</dbReference>
<dbReference type="GO" id="GO:0030388">
    <property type="term" value="P:fructose 1,6-bisphosphate metabolic process"/>
    <property type="evidence" value="ECO:0007669"/>
    <property type="project" value="TreeGrafter"/>
</dbReference>
<dbReference type="GO" id="GO:0006002">
    <property type="term" value="P:fructose 6-phosphate metabolic process"/>
    <property type="evidence" value="ECO:0007669"/>
    <property type="project" value="TreeGrafter"/>
</dbReference>
<dbReference type="GO" id="GO:0006000">
    <property type="term" value="P:fructose metabolic process"/>
    <property type="evidence" value="ECO:0007669"/>
    <property type="project" value="TreeGrafter"/>
</dbReference>
<dbReference type="GO" id="GO:0006094">
    <property type="term" value="P:gluconeogenesis"/>
    <property type="evidence" value="ECO:0007669"/>
    <property type="project" value="UniProtKB-UniRule"/>
</dbReference>
<dbReference type="GO" id="GO:0005986">
    <property type="term" value="P:sucrose biosynthetic process"/>
    <property type="evidence" value="ECO:0007669"/>
    <property type="project" value="TreeGrafter"/>
</dbReference>
<dbReference type="CDD" id="cd00354">
    <property type="entry name" value="FBPase"/>
    <property type="match status" value="1"/>
</dbReference>
<dbReference type="FunFam" id="3.30.540.10:FF:000002">
    <property type="entry name" value="Fructose-1,6-bisphosphatase class 1"/>
    <property type="match status" value="1"/>
</dbReference>
<dbReference type="FunFam" id="3.40.190.80:FF:000001">
    <property type="entry name" value="Fructose-1,6-bisphosphatase class 1"/>
    <property type="match status" value="1"/>
</dbReference>
<dbReference type="Gene3D" id="3.40.190.80">
    <property type="match status" value="1"/>
</dbReference>
<dbReference type="Gene3D" id="3.30.540.10">
    <property type="entry name" value="Fructose-1,6-Bisphosphatase, subunit A, domain 1"/>
    <property type="match status" value="1"/>
</dbReference>
<dbReference type="HAMAP" id="MF_01855">
    <property type="entry name" value="FBPase_class1"/>
    <property type="match status" value="1"/>
</dbReference>
<dbReference type="InterPro" id="IPR044015">
    <property type="entry name" value="FBPase_C_dom"/>
</dbReference>
<dbReference type="InterPro" id="IPR000146">
    <property type="entry name" value="FBPase_class-1"/>
</dbReference>
<dbReference type="InterPro" id="IPR033391">
    <property type="entry name" value="FBPase_N"/>
</dbReference>
<dbReference type="InterPro" id="IPR028343">
    <property type="entry name" value="FBPtase"/>
</dbReference>
<dbReference type="InterPro" id="IPR020548">
    <property type="entry name" value="Fructose_bisphosphatase_AS"/>
</dbReference>
<dbReference type="NCBIfam" id="NF006778">
    <property type="entry name" value="PRK09293.1-1"/>
    <property type="match status" value="1"/>
</dbReference>
<dbReference type="NCBIfam" id="NF006779">
    <property type="entry name" value="PRK09293.1-3"/>
    <property type="match status" value="1"/>
</dbReference>
<dbReference type="PANTHER" id="PTHR11556">
    <property type="entry name" value="FRUCTOSE-1,6-BISPHOSPHATASE-RELATED"/>
    <property type="match status" value="1"/>
</dbReference>
<dbReference type="PANTHER" id="PTHR11556:SF35">
    <property type="entry name" value="SEDOHEPTULOSE-1,7-BISPHOSPHATASE, CHLOROPLASTIC"/>
    <property type="match status" value="1"/>
</dbReference>
<dbReference type="Pfam" id="PF00316">
    <property type="entry name" value="FBPase"/>
    <property type="match status" value="1"/>
</dbReference>
<dbReference type="Pfam" id="PF18913">
    <property type="entry name" value="FBPase_C"/>
    <property type="match status" value="1"/>
</dbReference>
<dbReference type="PIRSF" id="PIRSF500210">
    <property type="entry name" value="FBPtase"/>
    <property type="match status" value="1"/>
</dbReference>
<dbReference type="PIRSF" id="PIRSF000904">
    <property type="entry name" value="FBPtase_SBPase"/>
    <property type="match status" value="1"/>
</dbReference>
<dbReference type="PRINTS" id="PR00115">
    <property type="entry name" value="F16BPHPHTASE"/>
</dbReference>
<dbReference type="SUPFAM" id="SSF56655">
    <property type="entry name" value="Carbohydrate phosphatase"/>
    <property type="match status" value="1"/>
</dbReference>
<dbReference type="PROSITE" id="PS00124">
    <property type="entry name" value="FBPASE"/>
    <property type="match status" value="1"/>
</dbReference>
<feature type="chain" id="PRO_0000364582" description="Fructose-1,6-bisphosphatase class 1">
    <location>
        <begin position="1"/>
        <end position="332"/>
    </location>
</feature>
<feature type="binding site" evidence="1">
    <location>
        <position position="89"/>
    </location>
    <ligand>
        <name>Mg(2+)</name>
        <dbReference type="ChEBI" id="CHEBI:18420"/>
        <label>1</label>
    </ligand>
</feature>
<feature type="binding site" evidence="1">
    <location>
        <position position="110"/>
    </location>
    <ligand>
        <name>Mg(2+)</name>
        <dbReference type="ChEBI" id="CHEBI:18420"/>
        <label>1</label>
    </ligand>
</feature>
<feature type="binding site" evidence="1">
    <location>
        <position position="110"/>
    </location>
    <ligand>
        <name>Mg(2+)</name>
        <dbReference type="ChEBI" id="CHEBI:18420"/>
        <label>2</label>
    </ligand>
</feature>
<feature type="binding site" evidence="1">
    <location>
        <position position="112"/>
    </location>
    <ligand>
        <name>Mg(2+)</name>
        <dbReference type="ChEBI" id="CHEBI:18420"/>
        <label>1</label>
    </ligand>
</feature>
<feature type="binding site" evidence="1">
    <location>
        <begin position="113"/>
        <end position="116"/>
    </location>
    <ligand>
        <name>substrate</name>
    </ligand>
</feature>
<feature type="binding site" evidence="1">
    <location>
        <position position="113"/>
    </location>
    <ligand>
        <name>Mg(2+)</name>
        <dbReference type="ChEBI" id="CHEBI:18420"/>
        <label>2</label>
    </ligand>
</feature>
<feature type="binding site" evidence="1">
    <location>
        <position position="206"/>
    </location>
    <ligand>
        <name>substrate</name>
    </ligand>
</feature>
<feature type="binding site" evidence="1">
    <location>
        <position position="239"/>
    </location>
    <ligand>
        <name>substrate</name>
    </ligand>
</feature>
<feature type="binding site" evidence="1">
    <location>
        <begin position="257"/>
        <end position="259"/>
    </location>
    <ligand>
        <name>substrate</name>
    </ligand>
</feature>
<feature type="binding site" evidence="1">
    <location>
        <position position="269"/>
    </location>
    <ligand>
        <name>substrate</name>
    </ligand>
</feature>
<feature type="binding site" evidence="1">
    <location>
        <position position="275"/>
    </location>
    <ligand>
        <name>Mg(2+)</name>
        <dbReference type="ChEBI" id="CHEBI:18420"/>
        <label>2</label>
    </ligand>
</feature>
<sequence>MKTLGEFIVEKQHEFSHATGELTALLSAIKLGAKIIHRDINKAGLVDILGASGAENVQGEVQQKLDLFANEKLKAALRARDIVAGIASEEEDEIVVFEGCEHAKYVVLMDPLDGSSNIDVNVSVGTIFSIYRRVTPVGTPVTEEDFLQPGNKQVAAGYVVYGSSTMLVYTTGCGVHAFTYDPSLGVFCLCQERMRFPEKGNTYSINEGNYIKFPQGVKKYIKYCQEEDKATQRPYTSRYIGSLVADFHRNLLKGGIYLYPSTASHPEGKLRLLYECNPMAFLAEQAGGKASDGKERILDIIPESLHQRRSFFVGNNHMVEDVENFIKAFPDA</sequence>
<reference key="1">
    <citation type="submission" date="2006-09" db="EMBL/GenBank/DDBJ databases">
        <authorList>
            <consortium name="The Klebsiella pneumonia Genome Sequencing Project"/>
            <person name="McClelland M."/>
            <person name="Sanderson E.K."/>
            <person name="Spieth J."/>
            <person name="Clifton W.S."/>
            <person name="Latreille P."/>
            <person name="Sabo A."/>
            <person name="Pepin K."/>
            <person name="Bhonagiri V."/>
            <person name="Porwollik S."/>
            <person name="Ali J."/>
            <person name="Wilson R.K."/>
        </authorList>
    </citation>
    <scope>NUCLEOTIDE SEQUENCE [LARGE SCALE GENOMIC DNA]</scope>
    <source>
        <strain>ATCC 700721 / MGH 78578</strain>
    </source>
</reference>
<name>F16PA_KLEP7</name>
<keyword id="KW-0119">Carbohydrate metabolism</keyword>
<keyword id="KW-0963">Cytoplasm</keyword>
<keyword id="KW-0378">Hydrolase</keyword>
<keyword id="KW-0460">Magnesium</keyword>
<keyword id="KW-0479">Metal-binding</keyword>
<comment type="catalytic activity">
    <reaction evidence="1">
        <text>beta-D-fructose 1,6-bisphosphate + H2O = beta-D-fructose 6-phosphate + phosphate</text>
        <dbReference type="Rhea" id="RHEA:11064"/>
        <dbReference type="ChEBI" id="CHEBI:15377"/>
        <dbReference type="ChEBI" id="CHEBI:32966"/>
        <dbReference type="ChEBI" id="CHEBI:43474"/>
        <dbReference type="ChEBI" id="CHEBI:57634"/>
        <dbReference type="EC" id="3.1.3.11"/>
    </reaction>
</comment>
<comment type="cofactor">
    <cofactor evidence="1">
        <name>Mg(2+)</name>
        <dbReference type="ChEBI" id="CHEBI:18420"/>
    </cofactor>
    <text evidence="1">Binds 2 magnesium ions per subunit.</text>
</comment>
<comment type="pathway">
    <text evidence="1">Carbohydrate biosynthesis; gluconeogenesis.</text>
</comment>
<comment type="subunit">
    <text evidence="1">Homotetramer.</text>
</comment>
<comment type="subcellular location">
    <subcellularLocation>
        <location evidence="1">Cytoplasm</location>
    </subcellularLocation>
</comment>
<comment type="similarity">
    <text evidence="1">Belongs to the FBPase class 1 family.</text>
</comment>
<proteinExistence type="inferred from homology"/>